<feature type="chain" id="PRO_0000170455" description="Nucleoid-associated protein Synpcc7942_0464">
    <location>
        <begin position="1"/>
        <end position="113"/>
    </location>
</feature>
<proteinExistence type="inferred from homology"/>
<sequence length="113" mass="11937">MAGKGFGFSLGKMKELADAFKKAQQVQEGAKQVQEDLNNMEIEGQAQGGLVKVWVSGNQEPLRAEIAPEALNEGAEVLSELVAAAMKDAYQKSTAAMKEKMEALTAGLGIPGL</sequence>
<gene>
    <name type="ordered locus">Synpcc7942_0464</name>
    <name type="ORF">sek0006</name>
</gene>
<keyword id="KW-0963">Cytoplasm</keyword>
<keyword id="KW-0238">DNA-binding</keyword>
<keyword id="KW-1185">Reference proteome</keyword>
<dbReference type="EMBL" id="X04616">
    <property type="protein sequence ID" value="CAD55612.1"/>
    <property type="status" value="ALT_INIT"/>
    <property type="molecule type" value="Genomic_DNA"/>
</dbReference>
<dbReference type="EMBL" id="CP000100">
    <property type="protein sequence ID" value="ABB56496.1"/>
    <property type="status" value="ALT_INIT"/>
    <property type="molecule type" value="Genomic_DNA"/>
</dbReference>
<dbReference type="RefSeq" id="WP_011243366.1">
    <property type="nucleotide sequence ID" value="NZ_JACJTX010000002.1"/>
</dbReference>
<dbReference type="SMR" id="Q8GMT0"/>
<dbReference type="STRING" id="1140.Synpcc7942_0464"/>
<dbReference type="PaxDb" id="1140-Synpcc7942_0464"/>
<dbReference type="KEGG" id="syf:Synpcc7942_0464"/>
<dbReference type="eggNOG" id="COG0718">
    <property type="taxonomic scope" value="Bacteria"/>
</dbReference>
<dbReference type="HOGENOM" id="CLU_140930_0_1_3"/>
<dbReference type="OrthoDB" id="487780at2"/>
<dbReference type="BioCyc" id="SYNEL:SYNPCC7942_0464-MONOMER"/>
<dbReference type="Proteomes" id="UP000889800">
    <property type="component" value="Chromosome"/>
</dbReference>
<dbReference type="GO" id="GO:0043590">
    <property type="term" value="C:bacterial nucleoid"/>
    <property type="evidence" value="ECO:0007669"/>
    <property type="project" value="UniProtKB-UniRule"/>
</dbReference>
<dbReference type="GO" id="GO:0005829">
    <property type="term" value="C:cytosol"/>
    <property type="evidence" value="ECO:0007669"/>
    <property type="project" value="TreeGrafter"/>
</dbReference>
<dbReference type="GO" id="GO:0003677">
    <property type="term" value="F:DNA binding"/>
    <property type="evidence" value="ECO:0007669"/>
    <property type="project" value="UniProtKB-UniRule"/>
</dbReference>
<dbReference type="Gene3D" id="3.30.1310.10">
    <property type="entry name" value="Nucleoid-associated protein YbaB-like domain"/>
    <property type="match status" value="1"/>
</dbReference>
<dbReference type="HAMAP" id="MF_00274">
    <property type="entry name" value="DNA_YbaB_EbfC"/>
    <property type="match status" value="1"/>
</dbReference>
<dbReference type="InterPro" id="IPR036894">
    <property type="entry name" value="YbaB-like_sf"/>
</dbReference>
<dbReference type="InterPro" id="IPR004401">
    <property type="entry name" value="YbaB/EbfC"/>
</dbReference>
<dbReference type="NCBIfam" id="TIGR00103">
    <property type="entry name" value="DNA_YbaB_EbfC"/>
    <property type="match status" value="1"/>
</dbReference>
<dbReference type="PANTHER" id="PTHR33449">
    <property type="entry name" value="NUCLEOID-ASSOCIATED PROTEIN YBAB"/>
    <property type="match status" value="1"/>
</dbReference>
<dbReference type="PANTHER" id="PTHR33449:SF1">
    <property type="entry name" value="NUCLEOID-ASSOCIATED PROTEIN YBAB"/>
    <property type="match status" value="1"/>
</dbReference>
<dbReference type="Pfam" id="PF02575">
    <property type="entry name" value="YbaB_DNA_bd"/>
    <property type="match status" value="1"/>
</dbReference>
<dbReference type="PIRSF" id="PIRSF004555">
    <property type="entry name" value="UCP004555"/>
    <property type="match status" value="1"/>
</dbReference>
<dbReference type="SUPFAM" id="SSF82607">
    <property type="entry name" value="YbaB-like"/>
    <property type="match status" value="1"/>
</dbReference>
<accession>Q8GMT0</accession>
<accession>Q31R23</accession>
<comment type="function">
    <text evidence="1">Binds to DNA and alters its conformation. May be involved in regulation of gene expression, nucleoid organization and DNA protection.</text>
</comment>
<comment type="subunit">
    <text evidence="1">Homodimer.</text>
</comment>
<comment type="subcellular location">
    <subcellularLocation>
        <location evidence="1">Cytoplasm</location>
        <location evidence="1">Nucleoid</location>
    </subcellularLocation>
</comment>
<comment type="similarity">
    <text evidence="1">Belongs to the YbaB/EbfC family.</text>
</comment>
<comment type="sequence caution" evidence="2">
    <conflict type="erroneous initiation">
        <sequence resource="EMBL-CDS" id="ABB56496"/>
    </conflict>
</comment>
<comment type="sequence caution" evidence="2">
    <conflict type="erroneous initiation">
        <sequence resource="EMBL-CDS" id="CAD55612"/>
    </conflict>
</comment>
<reference key="1">
    <citation type="submission" date="2002-07" db="EMBL/GenBank/DDBJ databases">
        <title>Synechococcus elongatus PCC 7942 cosmid 3E9.</title>
        <authorList>
            <person name="Holtman C.K."/>
            <person name="Sandoval P."/>
            <person name="Chen Y."/>
            <person name="Socias T."/>
            <person name="Mohler B.J."/>
            <person name="McMurtry S."/>
            <person name="Gonzalez A."/>
            <person name="Salinas I."/>
            <person name="Golden S.S."/>
            <person name="Youderian P."/>
        </authorList>
    </citation>
    <scope>NUCLEOTIDE SEQUENCE [GENOMIC DNA]</scope>
</reference>
<reference key="2">
    <citation type="submission" date="2005-08" db="EMBL/GenBank/DDBJ databases">
        <title>Complete sequence of chromosome 1 of Synechococcus elongatus PCC 7942.</title>
        <authorList>
            <consortium name="US DOE Joint Genome Institute"/>
            <person name="Copeland A."/>
            <person name="Lucas S."/>
            <person name="Lapidus A."/>
            <person name="Barry K."/>
            <person name="Detter J.C."/>
            <person name="Glavina T."/>
            <person name="Hammon N."/>
            <person name="Israni S."/>
            <person name="Pitluck S."/>
            <person name="Schmutz J."/>
            <person name="Larimer F."/>
            <person name="Land M."/>
            <person name="Kyrpides N."/>
            <person name="Lykidis A."/>
            <person name="Golden S."/>
            <person name="Richardson P."/>
        </authorList>
    </citation>
    <scope>NUCLEOTIDE SEQUENCE [LARGE SCALE GENOMIC DNA]</scope>
    <source>
        <strain>ATCC 33912 / PCC 7942 / FACHB-805</strain>
    </source>
</reference>
<evidence type="ECO:0000255" key="1">
    <source>
        <dbReference type="HAMAP-Rule" id="MF_00274"/>
    </source>
</evidence>
<evidence type="ECO:0000305" key="2"/>
<name>Y464_SYNE7</name>
<protein>
    <recommendedName>
        <fullName evidence="1">Nucleoid-associated protein Synpcc7942_0464</fullName>
    </recommendedName>
</protein>
<organism>
    <name type="scientific">Synechococcus elongatus (strain ATCC 33912 / PCC 7942 / FACHB-805)</name>
    <name type="common">Anacystis nidulans R2</name>
    <dbReference type="NCBI Taxonomy" id="1140"/>
    <lineage>
        <taxon>Bacteria</taxon>
        <taxon>Bacillati</taxon>
        <taxon>Cyanobacteriota</taxon>
        <taxon>Cyanophyceae</taxon>
        <taxon>Synechococcales</taxon>
        <taxon>Synechococcaceae</taxon>
        <taxon>Synechococcus</taxon>
    </lineage>
</organism>